<name>KLRI2_RAT</name>
<accession>Q5DT37</accession>
<dbReference type="EMBL" id="AY324871">
    <property type="protein sequence ID" value="AAR00557.1"/>
    <property type="molecule type" value="mRNA"/>
</dbReference>
<dbReference type="EMBL" id="AC108288">
    <property type="status" value="NOT_ANNOTATED_CDS"/>
    <property type="molecule type" value="Genomic_DNA"/>
</dbReference>
<dbReference type="RefSeq" id="NP_001012666.1">
    <property type="nucleotide sequence ID" value="NM_001012648.1"/>
</dbReference>
<dbReference type="SMR" id="Q5DT37"/>
<dbReference type="STRING" id="10116.ENSRNOP00000074478"/>
<dbReference type="GlyCosmos" id="Q5DT37">
    <property type="glycosylation" value="4 sites, No reported glycans"/>
</dbReference>
<dbReference type="GlyGen" id="Q5DT37">
    <property type="glycosylation" value="4 sites"/>
</dbReference>
<dbReference type="PhosphoSitePlus" id="Q5DT37"/>
<dbReference type="PaxDb" id="10116-ENSRNOP00000036796"/>
<dbReference type="Ensembl" id="ENSRNOT00000082002.2">
    <property type="protein sequence ID" value="ENSRNOP00000074478.1"/>
    <property type="gene ID" value="ENSRNOG00000057643.2"/>
</dbReference>
<dbReference type="GeneID" id="503650"/>
<dbReference type="KEGG" id="rno:503650"/>
<dbReference type="UCSC" id="RGD:1359205">
    <property type="organism name" value="rat"/>
</dbReference>
<dbReference type="AGR" id="RGD:1359205"/>
<dbReference type="CTD" id="320407"/>
<dbReference type="RGD" id="1359205">
    <property type="gene designation" value="Klri2"/>
</dbReference>
<dbReference type="eggNOG" id="KOG4297">
    <property type="taxonomic scope" value="Eukaryota"/>
</dbReference>
<dbReference type="GeneTree" id="ENSGT00940000164228"/>
<dbReference type="HOGENOM" id="CLU_049894_9_2_1"/>
<dbReference type="InParanoid" id="Q5DT37"/>
<dbReference type="OMA" id="SKNDECS"/>
<dbReference type="OrthoDB" id="7357196at2759"/>
<dbReference type="PhylomeDB" id="Q5DT37"/>
<dbReference type="TreeFam" id="TF336674"/>
<dbReference type="PRO" id="PR:Q5DT37"/>
<dbReference type="Proteomes" id="UP000002494">
    <property type="component" value="Chromosome 4"/>
</dbReference>
<dbReference type="Bgee" id="ENSRNOG00000057643">
    <property type="expression patterns" value="Expressed in spleen and 6 other cell types or tissues"/>
</dbReference>
<dbReference type="ExpressionAtlas" id="Q5DT37">
    <property type="expression patterns" value="baseline"/>
</dbReference>
<dbReference type="GO" id="GO:0009897">
    <property type="term" value="C:external side of plasma membrane"/>
    <property type="evidence" value="ECO:0000318"/>
    <property type="project" value="GO_Central"/>
</dbReference>
<dbReference type="GO" id="GO:0005886">
    <property type="term" value="C:plasma membrane"/>
    <property type="evidence" value="ECO:0000314"/>
    <property type="project" value="MGI"/>
</dbReference>
<dbReference type="GO" id="GO:0030246">
    <property type="term" value="F:carbohydrate binding"/>
    <property type="evidence" value="ECO:0007669"/>
    <property type="project" value="UniProtKB-KW"/>
</dbReference>
<dbReference type="GO" id="GO:0004888">
    <property type="term" value="F:transmembrane signaling receptor activity"/>
    <property type="evidence" value="ECO:0000318"/>
    <property type="project" value="GO_Central"/>
</dbReference>
<dbReference type="GO" id="GO:0045954">
    <property type="term" value="P:positive regulation of natural killer cell mediated cytotoxicity"/>
    <property type="evidence" value="ECO:0000318"/>
    <property type="project" value="GO_Central"/>
</dbReference>
<dbReference type="GO" id="GO:0002223">
    <property type="term" value="P:stimulatory C-type lectin receptor signaling pathway"/>
    <property type="evidence" value="ECO:0000318"/>
    <property type="project" value="GO_Central"/>
</dbReference>
<dbReference type="FunFam" id="3.10.100.10:FF:000175">
    <property type="entry name" value="Killer cell lectin-like receptor subfamily I member 1"/>
    <property type="match status" value="1"/>
</dbReference>
<dbReference type="Gene3D" id="3.10.100.10">
    <property type="entry name" value="Mannose-Binding Protein A, subunit A"/>
    <property type="match status" value="1"/>
</dbReference>
<dbReference type="InterPro" id="IPR001304">
    <property type="entry name" value="C-type_lectin-like"/>
</dbReference>
<dbReference type="InterPro" id="IPR016186">
    <property type="entry name" value="C-type_lectin-like/link_sf"/>
</dbReference>
<dbReference type="InterPro" id="IPR016187">
    <property type="entry name" value="CTDL_fold"/>
</dbReference>
<dbReference type="InterPro" id="IPR050919">
    <property type="entry name" value="NKG2/CD94_NK_receptors"/>
</dbReference>
<dbReference type="PANTHER" id="PTHR22800">
    <property type="entry name" value="C-TYPE LECTIN PROTEINS"/>
    <property type="match status" value="1"/>
</dbReference>
<dbReference type="PANTHER" id="PTHR22800:SF237">
    <property type="entry name" value="KILLER CELL LECTIN-LIKE RECEPTOR SUBFAMILY I MEMBER 2"/>
    <property type="match status" value="1"/>
</dbReference>
<dbReference type="Pfam" id="PF00059">
    <property type="entry name" value="Lectin_C"/>
    <property type="match status" value="1"/>
</dbReference>
<dbReference type="SMART" id="SM00034">
    <property type="entry name" value="CLECT"/>
    <property type="match status" value="1"/>
</dbReference>
<dbReference type="SUPFAM" id="SSF56436">
    <property type="entry name" value="C-type lectin-like"/>
    <property type="match status" value="1"/>
</dbReference>
<dbReference type="PROSITE" id="PS50041">
    <property type="entry name" value="C_TYPE_LECTIN_2"/>
    <property type="match status" value="1"/>
</dbReference>
<evidence type="ECO:0000250" key="1">
    <source>
        <dbReference type="UniProtKB" id="Q13241"/>
    </source>
</evidence>
<evidence type="ECO:0000255" key="2"/>
<evidence type="ECO:0000255" key="3">
    <source>
        <dbReference type="PROSITE-ProRule" id="PRU00040"/>
    </source>
</evidence>
<evidence type="ECO:0000255" key="4">
    <source>
        <dbReference type="PROSITE-ProRule" id="PRU00498"/>
    </source>
</evidence>
<evidence type="ECO:0000256" key="5">
    <source>
        <dbReference type="SAM" id="MobiDB-lite"/>
    </source>
</evidence>
<evidence type="ECO:0000269" key="6">
    <source>
    </source>
</evidence>
<evidence type="ECO:0000269" key="7">
    <source>
    </source>
</evidence>
<evidence type="ECO:0000303" key="8">
    <source>
    </source>
</evidence>
<evidence type="ECO:0000305" key="9"/>
<evidence type="ECO:0000312" key="10">
    <source>
        <dbReference type="EMBL" id="AAR00557.1"/>
    </source>
</evidence>
<evidence type="ECO:0000312" key="11">
    <source>
        <dbReference type="Proteomes" id="UP000002494"/>
    </source>
</evidence>
<keyword id="KW-1003">Cell membrane</keyword>
<keyword id="KW-1015">Disulfide bond</keyword>
<keyword id="KW-0325">Glycoprotein</keyword>
<keyword id="KW-0430">Lectin</keyword>
<keyword id="KW-0472">Membrane</keyword>
<keyword id="KW-0675">Receptor</keyword>
<keyword id="KW-1185">Reference proteome</keyword>
<keyword id="KW-0735">Signal-anchor</keyword>
<keyword id="KW-0812">Transmembrane</keyword>
<keyword id="KW-1133">Transmembrane helix</keyword>
<comment type="function">
    <text evidence="7">Lectin-like receptor for natural killer (NK) cells. Heterodimer formation with KLRE1 mediates NK cell cytolytic activity.</text>
</comment>
<comment type="subunit">
    <text evidence="7">Heterodimer with KLRE1.</text>
</comment>
<comment type="subcellular location">
    <subcellularLocation>
        <location evidence="6 7">Cell membrane</location>
        <topology evidence="2">Single-pass type II membrane protein</topology>
    </subcellularLocation>
</comment>
<comment type="tissue specificity">
    <text evidence="6">Expressed in natural killer (NK) cells.</text>
</comment>
<sequence length="247" mass="28814">MPRKKQNERGTNKQEIINIETKSSTFQEKQRQSKTDQISTVWRKEQKKQELKVHTELHPQHRTGFNEDKGTDPWLTTWRIITVILGTSCIILVTKVGFLIPNLFSRGEKRSRELSLLDSLCLKNNDSFCDLCSHDWIAFGNNFYLFFRGTKTWAESKSACEELNSYLLDIDSRAELENLLLFEINGWILFKTDAINRSLRKNYIKIHQTLFNDSEKKNHSCHYLSGNQFSAGDCSSKKAYTCEFNLQ</sequence>
<organism evidence="11">
    <name type="scientific">Rattus norvegicus</name>
    <name type="common">Rat</name>
    <dbReference type="NCBI Taxonomy" id="10116"/>
    <lineage>
        <taxon>Eukaryota</taxon>
        <taxon>Metazoa</taxon>
        <taxon>Chordata</taxon>
        <taxon>Craniata</taxon>
        <taxon>Vertebrata</taxon>
        <taxon>Euteleostomi</taxon>
        <taxon>Mammalia</taxon>
        <taxon>Eutheria</taxon>
        <taxon>Euarchontoglires</taxon>
        <taxon>Glires</taxon>
        <taxon>Rodentia</taxon>
        <taxon>Myomorpha</taxon>
        <taxon>Muroidea</taxon>
        <taxon>Muridae</taxon>
        <taxon>Murinae</taxon>
        <taxon>Rattus</taxon>
    </lineage>
</organism>
<gene>
    <name evidence="8" type="primary">Klri2</name>
</gene>
<feature type="chain" id="PRO_0000442202" description="Killer cell lectin-like receptor subfamily I member 2">
    <location>
        <begin position="1"/>
        <end position="247"/>
    </location>
</feature>
<feature type="topological domain" description="Cytoplasmic" evidence="9">
    <location>
        <begin position="1"/>
        <end position="79"/>
    </location>
</feature>
<feature type="transmembrane region" description="Helical" evidence="2">
    <location>
        <begin position="80"/>
        <end position="100"/>
    </location>
</feature>
<feature type="topological domain" description="Extracellular" evidence="9">
    <location>
        <begin position="101"/>
        <end position="247"/>
    </location>
</feature>
<feature type="domain" description="C-type lectin" evidence="3">
    <location>
        <begin position="139"/>
        <end position="243"/>
    </location>
</feature>
<feature type="region of interest" description="Disordered" evidence="5">
    <location>
        <begin position="1"/>
        <end position="39"/>
    </location>
</feature>
<feature type="compositionally biased region" description="Basic and acidic residues" evidence="5">
    <location>
        <begin position="1"/>
        <end position="12"/>
    </location>
</feature>
<feature type="glycosylation site" description="N-linked (GlcNAc...) asparagine" evidence="4">
    <location>
        <position position="125"/>
    </location>
</feature>
<feature type="glycosylation site" description="N-linked (GlcNAc...) asparagine" evidence="4">
    <location>
        <position position="196"/>
    </location>
</feature>
<feature type="glycosylation site" description="N-linked (GlcNAc...) asparagine" evidence="4">
    <location>
        <position position="212"/>
    </location>
</feature>
<feature type="glycosylation site" description="N-linked (GlcNAc...) asparagine" evidence="4">
    <location>
        <position position="218"/>
    </location>
</feature>
<feature type="disulfide bond" evidence="1">
    <location>
        <begin position="160"/>
        <end position="242"/>
    </location>
</feature>
<feature type="disulfide bond" evidence="1">
    <location>
        <begin position="221"/>
        <end position="234"/>
    </location>
</feature>
<protein>
    <recommendedName>
        <fullName evidence="8">Killer cell lectin-like receptor subfamily I member 2</fullName>
    </recommendedName>
</protein>
<reference evidence="10" key="1">
    <citation type="journal article" date="2005" name="Immunogenetics">
        <title>Molecular cloning of KLRI1 and KLRI2, a novel pair of lectin-like natural killer-cell receptors with opposing signalling motifs.</title>
        <authorList>
            <person name="Saether P.C."/>
            <person name="Westgaard I.H."/>
            <person name="Flornes L.M."/>
            <person name="Hoelsbrekken S.E."/>
            <person name="Ryan J.C."/>
            <person name="Fossum S."/>
            <person name="Dissen E."/>
        </authorList>
    </citation>
    <scope>NUCLEOTIDE SEQUENCE [MRNA]</scope>
    <scope>SUBCELLULAR LOCATION</scope>
    <scope>TISSUE SPECIFICITY</scope>
    <source>
        <strain evidence="10">Fischer 344</strain>
    </source>
</reference>
<reference evidence="11" key="2">
    <citation type="journal article" date="2004" name="Nature">
        <title>Genome sequence of the Brown Norway rat yields insights into mammalian evolution.</title>
        <authorList>
            <person name="Gibbs R.A."/>
            <person name="Weinstock G.M."/>
            <person name="Metzker M.L."/>
            <person name="Muzny D.M."/>
            <person name="Sodergren E.J."/>
            <person name="Scherer S."/>
            <person name="Scott G."/>
            <person name="Steffen D."/>
            <person name="Worley K.C."/>
            <person name="Burch P.E."/>
            <person name="Okwuonu G."/>
            <person name="Hines S."/>
            <person name="Lewis L."/>
            <person name="Deramo C."/>
            <person name="Delgado O."/>
            <person name="Dugan-Rocha S."/>
            <person name="Miner G."/>
            <person name="Morgan M."/>
            <person name="Hawes A."/>
            <person name="Gill R."/>
            <person name="Holt R.A."/>
            <person name="Adams M.D."/>
            <person name="Amanatides P.G."/>
            <person name="Baden-Tillson H."/>
            <person name="Barnstead M."/>
            <person name="Chin S."/>
            <person name="Evans C.A."/>
            <person name="Ferriera S."/>
            <person name="Fosler C."/>
            <person name="Glodek A."/>
            <person name="Gu Z."/>
            <person name="Jennings D."/>
            <person name="Kraft C.L."/>
            <person name="Nguyen T."/>
            <person name="Pfannkoch C.M."/>
            <person name="Sitter C."/>
            <person name="Sutton G.G."/>
            <person name="Venter J.C."/>
            <person name="Woodage T."/>
            <person name="Smith D."/>
            <person name="Lee H.-M."/>
            <person name="Gustafson E."/>
            <person name="Cahill P."/>
            <person name="Kana A."/>
            <person name="Doucette-Stamm L."/>
            <person name="Weinstock K."/>
            <person name="Fechtel K."/>
            <person name="Weiss R.B."/>
            <person name="Dunn D.M."/>
            <person name="Green E.D."/>
            <person name="Blakesley R.W."/>
            <person name="Bouffard G.G."/>
            <person name="De Jong P.J."/>
            <person name="Osoegawa K."/>
            <person name="Zhu B."/>
            <person name="Marra M."/>
            <person name="Schein J."/>
            <person name="Bosdet I."/>
            <person name="Fjell C."/>
            <person name="Jones S."/>
            <person name="Krzywinski M."/>
            <person name="Mathewson C."/>
            <person name="Siddiqui A."/>
            <person name="Wye N."/>
            <person name="McPherson J."/>
            <person name="Zhao S."/>
            <person name="Fraser C.M."/>
            <person name="Shetty J."/>
            <person name="Shatsman S."/>
            <person name="Geer K."/>
            <person name="Chen Y."/>
            <person name="Abramzon S."/>
            <person name="Nierman W.C."/>
            <person name="Havlak P.H."/>
            <person name="Chen R."/>
            <person name="Durbin K.J."/>
            <person name="Egan A."/>
            <person name="Ren Y."/>
            <person name="Song X.-Z."/>
            <person name="Li B."/>
            <person name="Liu Y."/>
            <person name="Qin X."/>
            <person name="Cawley S."/>
            <person name="Cooney A.J."/>
            <person name="D'Souza L.M."/>
            <person name="Martin K."/>
            <person name="Wu J.Q."/>
            <person name="Gonzalez-Garay M.L."/>
            <person name="Jackson A.R."/>
            <person name="Kalafus K.J."/>
            <person name="McLeod M.P."/>
            <person name="Milosavljevic A."/>
            <person name="Virk D."/>
            <person name="Volkov A."/>
            <person name="Wheeler D.A."/>
            <person name="Zhang Z."/>
            <person name="Bailey J.A."/>
            <person name="Eichler E.E."/>
            <person name="Tuzun E."/>
            <person name="Birney E."/>
            <person name="Mongin E."/>
            <person name="Ureta-Vidal A."/>
            <person name="Woodwark C."/>
            <person name="Zdobnov E."/>
            <person name="Bork P."/>
            <person name="Suyama M."/>
            <person name="Torrents D."/>
            <person name="Alexandersson M."/>
            <person name="Trask B.J."/>
            <person name="Young J.M."/>
            <person name="Huang H."/>
            <person name="Wang H."/>
            <person name="Xing H."/>
            <person name="Daniels S."/>
            <person name="Gietzen D."/>
            <person name="Schmidt J."/>
            <person name="Stevens K."/>
            <person name="Vitt U."/>
            <person name="Wingrove J."/>
            <person name="Camara F."/>
            <person name="Mar Alba M."/>
            <person name="Abril J.F."/>
            <person name="Guigo R."/>
            <person name="Smit A."/>
            <person name="Dubchak I."/>
            <person name="Rubin E.M."/>
            <person name="Couronne O."/>
            <person name="Poliakov A."/>
            <person name="Huebner N."/>
            <person name="Ganten D."/>
            <person name="Goesele C."/>
            <person name="Hummel O."/>
            <person name="Kreitler T."/>
            <person name="Lee Y.-A."/>
            <person name="Monti J."/>
            <person name="Schulz H."/>
            <person name="Zimdahl H."/>
            <person name="Himmelbauer H."/>
            <person name="Lehrach H."/>
            <person name="Jacob H.J."/>
            <person name="Bromberg S."/>
            <person name="Gullings-Handley J."/>
            <person name="Jensen-Seaman M.I."/>
            <person name="Kwitek A.E."/>
            <person name="Lazar J."/>
            <person name="Pasko D."/>
            <person name="Tonellato P.J."/>
            <person name="Twigger S."/>
            <person name="Ponting C.P."/>
            <person name="Duarte J.M."/>
            <person name="Rice S."/>
            <person name="Goodstadt L."/>
            <person name="Beatson S.A."/>
            <person name="Emes R.D."/>
            <person name="Winter E.E."/>
            <person name="Webber C."/>
            <person name="Brandt P."/>
            <person name="Nyakatura G."/>
            <person name="Adetobi M."/>
            <person name="Chiaromonte F."/>
            <person name="Elnitski L."/>
            <person name="Eswara P."/>
            <person name="Hardison R.C."/>
            <person name="Hou M."/>
            <person name="Kolbe D."/>
            <person name="Makova K."/>
            <person name="Miller W."/>
            <person name="Nekrutenko A."/>
            <person name="Riemer C."/>
            <person name="Schwartz S."/>
            <person name="Taylor J."/>
            <person name="Yang S."/>
            <person name="Zhang Y."/>
            <person name="Lindpaintner K."/>
            <person name="Andrews T.D."/>
            <person name="Caccamo M."/>
            <person name="Clamp M."/>
            <person name="Clarke L."/>
            <person name="Curwen V."/>
            <person name="Durbin R.M."/>
            <person name="Eyras E."/>
            <person name="Searle S.M."/>
            <person name="Cooper G.M."/>
            <person name="Batzoglou S."/>
            <person name="Brudno M."/>
            <person name="Sidow A."/>
            <person name="Stone E.A."/>
            <person name="Payseur B.A."/>
            <person name="Bourque G."/>
            <person name="Lopez-Otin C."/>
            <person name="Puente X.S."/>
            <person name="Chakrabarti K."/>
            <person name="Chatterji S."/>
            <person name="Dewey C."/>
            <person name="Pachter L."/>
            <person name="Bray N."/>
            <person name="Yap V.B."/>
            <person name="Caspi A."/>
            <person name="Tesler G."/>
            <person name="Pevzner P.A."/>
            <person name="Haussler D."/>
            <person name="Roskin K.M."/>
            <person name="Baertsch R."/>
            <person name="Clawson H."/>
            <person name="Furey T.S."/>
            <person name="Hinrichs A.S."/>
            <person name="Karolchik D."/>
            <person name="Kent W.J."/>
            <person name="Rosenbloom K.R."/>
            <person name="Trumbower H."/>
            <person name="Weirauch M."/>
            <person name="Cooper D.N."/>
            <person name="Stenson P.D."/>
            <person name="Ma B."/>
            <person name="Brent M."/>
            <person name="Arumugam M."/>
            <person name="Shteynberg D."/>
            <person name="Copley R.R."/>
            <person name="Taylor M.S."/>
            <person name="Riethman H."/>
            <person name="Mudunuri U."/>
            <person name="Peterson J."/>
            <person name="Guyer M."/>
            <person name="Felsenfeld A."/>
            <person name="Old S."/>
            <person name="Mockrin S."/>
            <person name="Collins F.S."/>
        </authorList>
    </citation>
    <scope>NUCLEOTIDE SEQUENCE [LARGE SCALE GENOMIC DNA]</scope>
    <source>
        <strain>Brown Norway</strain>
    </source>
</reference>
<reference evidence="9" key="3">
    <citation type="journal article" date="2008" name="J. Immunol.">
        <title>KLRE/I1 and KLRE/I2: a novel pair of heterodimeric receptors that inversely regulate NK cell cytotoxicity.</title>
        <authorList>
            <person name="Saether P.C."/>
            <person name="Westgaard I.H."/>
            <person name="Hoelsbrekken S.E."/>
            <person name="Benjamin J."/>
            <person name="Lanier L.L."/>
            <person name="Fossum S."/>
            <person name="Dissen E."/>
        </authorList>
    </citation>
    <scope>FUNCTION</scope>
    <scope>SUBUNIT</scope>
    <scope>INTERACTION WITH KLRE1</scope>
    <scope>SUBCELLULAR LOCATION</scope>
</reference>
<proteinExistence type="evidence at protein level"/>